<feature type="chain" id="PRO_1000089114" description="Argininosuccinate lyase">
    <location>
        <begin position="1"/>
        <end position="458"/>
    </location>
</feature>
<protein>
    <recommendedName>
        <fullName evidence="1">Argininosuccinate lyase</fullName>
        <shortName evidence="1">ASAL</shortName>
        <ecNumber evidence="1">4.3.2.1</ecNumber>
    </recommendedName>
    <alternativeName>
        <fullName evidence="1">Arginosuccinase</fullName>
    </alternativeName>
</protein>
<dbReference type="EC" id="4.3.2.1" evidence="1"/>
<dbReference type="EMBL" id="CP001113">
    <property type="protein sequence ID" value="ACF62459.1"/>
    <property type="molecule type" value="Genomic_DNA"/>
</dbReference>
<dbReference type="RefSeq" id="WP_001230047.1">
    <property type="nucleotide sequence ID" value="NZ_CCMR01000001.1"/>
</dbReference>
<dbReference type="SMR" id="B4T0X1"/>
<dbReference type="KEGG" id="see:SNSL254_A4454"/>
<dbReference type="HOGENOM" id="CLU_027272_2_3_6"/>
<dbReference type="UniPathway" id="UPA00068">
    <property type="reaction ID" value="UER00114"/>
</dbReference>
<dbReference type="Proteomes" id="UP000008824">
    <property type="component" value="Chromosome"/>
</dbReference>
<dbReference type="GO" id="GO:0005829">
    <property type="term" value="C:cytosol"/>
    <property type="evidence" value="ECO:0007669"/>
    <property type="project" value="TreeGrafter"/>
</dbReference>
<dbReference type="GO" id="GO:0004056">
    <property type="term" value="F:argininosuccinate lyase activity"/>
    <property type="evidence" value="ECO:0007669"/>
    <property type="project" value="UniProtKB-UniRule"/>
</dbReference>
<dbReference type="GO" id="GO:0042450">
    <property type="term" value="P:arginine biosynthetic process via ornithine"/>
    <property type="evidence" value="ECO:0007669"/>
    <property type="project" value="InterPro"/>
</dbReference>
<dbReference type="GO" id="GO:0006526">
    <property type="term" value="P:L-arginine biosynthetic process"/>
    <property type="evidence" value="ECO:0007669"/>
    <property type="project" value="UniProtKB-UniRule"/>
</dbReference>
<dbReference type="CDD" id="cd01359">
    <property type="entry name" value="Argininosuccinate_lyase"/>
    <property type="match status" value="1"/>
</dbReference>
<dbReference type="FunFam" id="1.10.275.10:FF:000004">
    <property type="entry name" value="Argininosuccinate lyase"/>
    <property type="match status" value="1"/>
</dbReference>
<dbReference type="FunFam" id="1.10.40.30:FF:000001">
    <property type="entry name" value="Argininosuccinate lyase"/>
    <property type="match status" value="1"/>
</dbReference>
<dbReference type="FunFam" id="1.20.200.10:FF:000006">
    <property type="entry name" value="Argininosuccinate lyase"/>
    <property type="match status" value="1"/>
</dbReference>
<dbReference type="Gene3D" id="1.10.40.30">
    <property type="entry name" value="Fumarase/aspartase (C-terminal domain)"/>
    <property type="match status" value="1"/>
</dbReference>
<dbReference type="Gene3D" id="1.20.200.10">
    <property type="entry name" value="Fumarase/aspartase (Central domain)"/>
    <property type="match status" value="1"/>
</dbReference>
<dbReference type="Gene3D" id="1.10.275.10">
    <property type="entry name" value="Fumarase/aspartase (N-terminal domain)"/>
    <property type="match status" value="1"/>
</dbReference>
<dbReference type="HAMAP" id="MF_00006">
    <property type="entry name" value="Arg_succ_lyase"/>
    <property type="match status" value="1"/>
</dbReference>
<dbReference type="InterPro" id="IPR029419">
    <property type="entry name" value="Arg_succ_lyase_C"/>
</dbReference>
<dbReference type="InterPro" id="IPR009049">
    <property type="entry name" value="Argininosuccinate_lyase"/>
</dbReference>
<dbReference type="InterPro" id="IPR024083">
    <property type="entry name" value="Fumarase/histidase_N"/>
</dbReference>
<dbReference type="InterPro" id="IPR020557">
    <property type="entry name" value="Fumarate_lyase_CS"/>
</dbReference>
<dbReference type="InterPro" id="IPR000362">
    <property type="entry name" value="Fumarate_lyase_fam"/>
</dbReference>
<dbReference type="InterPro" id="IPR022761">
    <property type="entry name" value="Fumarate_lyase_N"/>
</dbReference>
<dbReference type="InterPro" id="IPR008948">
    <property type="entry name" value="L-Aspartase-like"/>
</dbReference>
<dbReference type="NCBIfam" id="TIGR00838">
    <property type="entry name" value="argH"/>
    <property type="match status" value="1"/>
</dbReference>
<dbReference type="NCBIfam" id="NF008964">
    <property type="entry name" value="PRK12308.1"/>
    <property type="match status" value="1"/>
</dbReference>
<dbReference type="PANTHER" id="PTHR43814">
    <property type="entry name" value="ARGININOSUCCINATE LYASE"/>
    <property type="match status" value="1"/>
</dbReference>
<dbReference type="PANTHER" id="PTHR43814:SF1">
    <property type="entry name" value="ARGININOSUCCINATE LYASE"/>
    <property type="match status" value="1"/>
</dbReference>
<dbReference type="Pfam" id="PF14698">
    <property type="entry name" value="ASL_C2"/>
    <property type="match status" value="1"/>
</dbReference>
<dbReference type="Pfam" id="PF00206">
    <property type="entry name" value="Lyase_1"/>
    <property type="match status" value="1"/>
</dbReference>
<dbReference type="PRINTS" id="PR00145">
    <property type="entry name" value="ARGSUCLYASE"/>
</dbReference>
<dbReference type="PRINTS" id="PR00149">
    <property type="entry name" value="FUMRATELYASE"/>
</dbReference>
<dbReference type="SUPFAM" id="SSF48557">
    <property type="entry name" value="L-aspartase-like"/>
    <property type="match status" value="1"/>
</dbReference>
<dbReference type="PROSITE" id="PS00163">
    <property type="entry name" value="FUMARATE_LYASES"/>
    <property type="match status" value="1"/>
</dbReference>
<keyword id="KW-0028">Amino-acid biosynthesis</keyword>
<keyword id="KW-0055">Arginine biosynthesis</keyword>
<keyword id="KW-0963">Cytoplasm</keyword>
<keyword id="KW-0456">Lyase</keyword>
<sequence>MALWGGRFTQAADQRFKQFNDSLRFDYRLAEQDIVGSVAWSKALVTVGVLTADEQRQLEEALNVLLEEVRANPQQILQSDAEDIHSWVEGKLIDKVGQLGKKLHTGRSRNDQVATDLKLWCKETVRELLTANRQLQSALVETAQANQDAVMPGYTHLQRAQPVTFAHWCLAYVEMLARDESRLQDTLKRLDVSPLGCGALAGTAYEIDREQLAGWLGFASATRNSLDSVSDRDHVLELLSDAAIGMVHLSRFAEDLIFFNSGEAGFVELSDRVTSGSSLMPQKKNPDALELIRGKCGRVQGALTGMMMTLKGLPLAYNKDMQEDKEGLFDALDTWLDCLHMAALVLDGIQVKRPRCQDAAQQGYANATELADYLVAKGVPFREAHHIVGEAVVEAIRQGKPLEALPLADLQKFSRVIGDDVYPILSLQSCLDKRAAKGGVSPLQVAQAINDAKARLAL</sequence>
<reference key="1">
    <citation type="journal article" date="2011" name="J. Bacteriol.">
        <title>Comparative genomics of 28 Salmonella enterica isolates: evidence for CRISPR-mediated adaptive sublineage evolution.</title>
        <authorList>
            <person name="Fricke W.F."/>
            <person name="Mammel M.K."/>
            <person name="McDermott P.F."/>
            <person name="Tartera C."/>
            <person name="White D.G."/>
            <person name="Leclerc J.E."/>
            <person name="Ravel J."/>
            <person name="Cebula T.A."/>
        </authorList>
    </citation>
    <scope>NUCLEOTIDE SEQUENCE [LARGE SCALE GENOMIC DNA]</scope>
    <source>
        <strain>SL254</strain>
    </source>
</reference>
<name>ARLY_SALNS</name>
<accession>B4T0X1</accession>
<evidence type="ECO:0000255" key="1">
    <source>
        <dbReference type="HAMAP-Rule" id="MF_00006"/>
    </source>
</evidence>
<gene>
    <name evidence="1" type="primary">argH</name>
    <name type="ordered locus">SNSL254_A4454</name>
</gene>
<organism>
    <name type="scientific">Salmonella newport (strain SL254)</name>
    <dbReference type="NCBI Taxonomy" id="423368"/>
    <lineage>
        <taxon>Bacteria</taxon>
        <taxon>Pseudomonadati</taxon>
        <taxon>Pseudomonadota</taxon>
        <taxon>Gammaproteobacteria</taxon>
        <taxon>Enterobacterales</taxon>
        <taxon>Enterobacteriaceae</taxon>
        <taxon>Salmonella</taxon>
    </lineage>
</organism>
<comment type="catalytic activity">
    <reaction evidence="1">
        <text>2-(N(omega)-L-arginino)succinate = fumarate + L-arginine</text>
        <dbReference type="Rhea" id="RHEA:24020"/>
        <dbReference type="ChEBI" id="CHEBI:29806"/>
        <dbReference type="ChEBI" id="CHEBI:32682"/>
        <dbReference type="ChEBI" id="CHEBI:57472"/>
        <dbReference type="EC" id="4.3.2.1"/>
    </reaction>
</comment>
<comment type="pathway">
    <text evidence="1">Amino-acid biosynthesis; L-arginine biosynthesis; L-arginine from L-ornithine and carbamoyl phosphate: step 3/3.</text>
</comment>
<comment type="subcellular location">
    <subcellularLocation>
        <location evidence="1">Cytoplasm</location>
    </subcellularLocation>
</comment>
<comment type="similarity">
    <text evidence="1">Belongs to the lyase 1 family. Argininosuccinate lyase subfamily.</text>
</comment>
<proteinExistence type="inferred from homology"/>